<organism>
    <name type="scientific">Rattus norvegicus</name>
    <name type="common">Rat</name>
    <dbReference type="NCBI Taxonomy" id="10116"/>
    <lineage>
        <taxon>Eukaryota</taxon>
        <taxon>Metazoa</taxon>
        <taxon>Chordata</taxon>
        <taxon>Craniata</taxon>
        <taxon>Vertebrata</taxon>
        <taxon>Euteleostomi</taxon>
        <taxon>Mammalia</taxon>
        <taxon>Eutheria</taxon>
        <taxon>Euarchontoglires</taxon>
        <taxon>Glires</taxon>
        <taxon>Rodentia</taxon>
        <taxon>Myomorpha</taxon>
        <taxon>Muroidea</taxon>
        <taxon>Muridae</taxon>
        <taxon>Murinae</taxon>
        <taxon>Rattus</taxon>
    </lineage>
</organism>
<protein>
    <recommendedName>
        <fullName evidence="12">Vesicular glutamate transporter 3</fullName>
        <shortName evidence="12">VGluT3</shortName>
    </recommendedName>
    <alternativeName>
        <fullName>Solute carrier family 17 member 8</fullName>
    </alternativeName>
</protein>
<comment type="function">
    <text evidence="1 4 6 10 11">Multifunctional transporter that transports L-glutamate as well as multiple ions such as chloride, sodium and phosphate (PubMed:12097496, PubMed:12388773, PubMed:27133463). At the synaptic vesicle membrane, mainly functions as an uniporter that mediates the uptake of L-glutamate into synaptic vesicles at presynaptic nerve terminals of excitatory neural cells (PubMed:12097496, PubMed:12388773, PubMed:27133463). The L-glutamate uniporter activity is electrogenic and is driven by the proton electrochemical gradient, mainly by the electrical gradient established by the vacuolar H(+)-ATPase across the synaptic vesicle membrane (PubMed:12097496, PubMed:12388773). In addition, functions as a chloride channel that allows a chloride permeation through the synaptic vesicle membrane that affects the proton electrochemical gradient and promotes synaptic vesicles acidification (PubMed:27133463). At the plasma membrane, following exocytosis, functions as a symporter of Na(+) and phosphate from the extracellular space to the cytoplasm allowing synaptic phosphate homeostasis regulation (By similarity). The symporter activity is electrogenic (By similarity). Moreover, operates synergistically with SLC18A3/VACHT under a constant H(+) gradient, thereby allowing striatal vesicular acetylcholine uptake (PubMed:18278042).</text>
</comment>
<comment type="catalytic activity">
    <reaction evidence="4 6 11">
        <text>L-glutamate(out) = L-glutamate(in)</text>
        <dbReference type="Rhea" id="RHEA:66336"/>
        <dbReference type="ChEBI" id="CHEBI:29985"/>
    </reaction>
</comment>
<comment type="catalytic activity">
    <reaction evidence="11">
        <text>chloride(in) = chloride(out)</text>
        <dbReference type="Rhea" id="RHEA:29823"/>
        <dbReference type="ChEBI" id="CHEBI:17996"/>
    </reaction>
</comment>
<comment type="catalytic activity">
    <reaction evidence="1">
        <text>3 Na(+)(out) + phosphate(out) = 3 Na(+)(in) + phosphate(in)</text>
        <dbReference type="Rhea" id="RHEA:71255"/>
        <dbReference type="ChEBI" id="CHEBI:29101"/>
        <dbReference type="ChEBI" id="CHEBI:43474"/>
    </reaction>
</comment>
<comment type="activity regulation">
    <text evidence="6 11">The L-glutamate uniporter activity exhibits a biphasic dependence on chloride concentration (PubMed:12388773). Chloride channel activity is allosterically activated by lumenal H(+) and Cl(-) leading to synaptic vesicles acidification (PubMed:27133463). The glutamate transport activity is allosterically activated by lumenal H(+) and Cl(-), preventing non-vesicular L-glutamate release (PubMed:27133463).</text>
</comment>
<comment type="biophysicochemical properties">
    <kinetics>
        <KM evidence="4">0.52 mM for L-glutamate</KM>
        <KM evidence="6">1.5 mM for L-glutamate</KM>
        <Vmax evidence="4">20.3 pmol/min/mg enzyme toward L-glutamate</Vmax>
    </kinetics>
</comment>
<comment type="subcellular location">
    <subcellularLocation>
        <location evidence="5 6 14">Cytoplasmic vesicle</location>
        <location evidence="5 6 14">Secretory vesicle</location>
        <location evidence="5 6 14">Synaptic vesicle membrane</location>
    </subcellularLocation>
    <subcellularLocation>
        <location evidence="1">Cell membrane</location>
        <topology evidence="13">Multi-pass membrane protein</topology>
    </subcellularLocation>
    <subcellularLocation>
        <location evidence="5 6">Synapse</location>
        <location evidence="5 6">Synaptosome</location>
    </subcellularLocation>
</comment>
<comment type="tissue specificity">
    <text evidence="4 5 6 7 8 9">Expressed in brain, kidney and liver. Expressed within the amygdala, brainstem, cerberal cortex, dorsal root ganglia, dorsal spinal cord, hippocampus, hypothalamus, retina, striatum and ventral spinal cord. Expressed within neurons of the caudate-putamen, olfactory tubercle, nucleus accumbens, hippocampus, interpeduncular nucleus and dorsal and medial raphe nuclei. Expressed in inner hair cells of the ear. Expressed at synaptic terminals within the lateral superior olive (LSO), a nucleus of the mammalian sound localization system, and in the medial nucleus of the trapezoid body (MNTB), which provides inhibitory input to the LSO.</text>
</comment>
<comment type="similarity">
    <text evidence="13">Belongs to the major facilitator superfamily. Sodium/anion cotransporter family. VGLUT subfamily.</text>
</comment>
<name>VGLU3_RAT</name>
<proteinExistence type="evidence at protein level"/>
<sequence length="588" mass="64755">MPFNAFDTFKEKILKPGKEGVKNAVGDSLGILQRKLDGTNEEGDAIELSEEGRPVQTSRARAPVCDCSCCGIPKRYIIAVMSGLGFCISFGIRCNLGVAIVEMVNNSTVYVDGKPEIQTAQFNWDPETVGLIHGSFFWGYIVTQIPGGFISNKFAANRVFGAAIFLTSTLNMFIPSAARVHYGCVMCVRILQGLVEGVTYPACHGMWSKWAPPLERSRLATTSFCGSYAGAVVAMPLAGVLVQYIGWASVFYIYGMFGIIWYMFWLLQAYECPAVHPTISNEERTYIETSIGEGANLASLSKFNTPWRRFFTSLPVYAIIVANFCRSWTFYLLLISQPAYFEEVFGFAISKVGLLSAVPHMVMTIVVPIGGQLADYLRSRKILTTTAVRKIMNCGGFGMEATLLLVVGFSHTKGVAISFLVLAVGFSGFAISGFNVNHLDIAPRYASILMGISNGVGTLSGMVCPLIVGAMTKHKTREEWQNVFLIAALVHYSGVIFYGVFASGEKQDWADPENLSEEKCGIIDQDELAEETELNHEAFVSPRKKMSYGATTQNCEVQKTDRRQQRESAFEGEEPLSYQNEEDFSETS</sequence>
<dbReference type="EMBL" id="AJ491795">
    <property type="protein sequence ID" value="CAD37138.1"/>
    <property type="molecule type" value="mRNA"/>
</dbReference>
<dbReference type="EMBL" id="AY117026">
    <property type="protein sequence ID" value="AAM50094.1"/>
    <property type="molecule type" value="mRNA"/>
</dbReference>
<dbReference type="RefSeq" id="NP_714947.1">
    <property type="nucleotide sequence ID" value="NM_153725.2"/>
</dbReference>
<dbReference type="SMR" id="Q7TSF2"/>
<dbReference type="FunCoup" id="Q7TSF2">
    <property type="interactions" value="467"/>
</dbReference>
<dbReference type="STRING" id="10116.ENSRNOP00000010207"/>
<dbReference type="BindingDB" id="Q7TSF2"/>
<dbReference type="ChEMBL" id="CHEMBL3472"/>
<dbReference type="DrugCentral" id="Q7TSF2"/>
<dbReference type="GlyCosmos" id="Q7TSF2">
    <property type="glycosylation" value="1 site, No reported glycans"/>
</dbReference>
<dbReference type="GlyGen" id="Q7TSF2">
    <property type="glycosylation" value="1 site"/>
</dbReference>
<dbReference type="PaxDb" id="10116-ENSRNOP00000010207"/>
<dbReference type="ABCD" id="Q7TSF2">
    <property type="antibodies" value="1 sequenced antibody"/>
</dbReference>
<dbReference type="Ensembl" id="ENSRNOT00000092527.2">
    <property type="protein sequence ID" value="ENSRNOP00000075876.1"/>
    <property type="gene ID" value="ENSRNOG00000007581.8"/>
</dbReference>
<dbReference type="GeneID" id="266767"/>
<dbReference type="KEGG" id="rno:266767"/>
<dbReference type="UCSC" id="RGD:628870">
    <property type="organism name" value="rat"/>
</dbReference>
<dbReference type="AGR" id="RGD:628870"/>
<dbReference type="CTD" id="246213"/>
<dbReference type="RGD" id="628870">
    <property type="gene designation" value="Slc17a8"/>
</dbReference>
<dbReference type="eggNOG" id="KOG2532">
    <property type="taxonomic scope" value="Eukaryota"/>
</dbReference>
<dbReference type="GeneTree" id="ENSGT00940000158187"/>
<dbReference type="HOGENOM" id="CLU_001265_5_0_1"/>
<dbReference type="InParanoid" id="Q7TSF2"/>
<dbReference type="OMA" id="VTTIFWN"/>
<dbReference type="OrthoDB" id="2985014at2759"/>
<dbReference type="PhylomeDB" id="Q7TSF2"/>
<dbReference type="TreeFam" id="TF313535"/>
<dbReference type="Reactome" id="R-RNO-428643">
    <property type="pathway name" value="Organic anion transporters"/>
</dbReference>
<dbReference type="PRO" id="PR:Q7TSF2"/>
<dbReference type="Proteomes" id="UP000002494">
    <property type="component" value="Chromosome 7"/>
</dbReference>
<dbReference type="Bgee" id="ENSRNOG00000007581">
    <property type="expression patterns" value="Expressed in liver and 5 other cell types or tissues"/>
</dbReference>
<dbReference type="GO" id="GO:0097440">
    <property type="term" value="C:apical dendrite"/>
    <property type="evidence" value="ECO:0000314"/>
    <property type="project" value="RGD"/>
</dbReference>
<dbReference type="GO" id="GO:0043679">
    <property type="term" value="C:axon terminus"/>
    <property type="evidence" value="ECO:0000314"/>
    <property type="project" value="RGD"/>
</dbReference>
<dbReference type="GO" id="GO:0097441">
    <property type="term" value="C:basal dendrite"/>
    <property type="evidence" value="ECO:0000314"/>
    <property type="project" value="RGD"/>
</dbReference>
<dbReference type="GO" id="GO:0034707">
    <property type="term" value="C:chloride channel complex"/>
    <property type="evidence" value="ECO:0007669"/>
    <property type="project" value="UniProtKB-KW"/>
</dbReference>
<dbReference type="GO" id="GO:0030425">
    <property type="term" value="C:dendrite"/>
    <property type="evidence" value="ECO:0000314"/>
    <property type="project" value="RGD"/>
</dbReference>
<dbReference type="GO" id="GO:0060076">
    <property type="term" value="C:excitatory synapse"/>
    <property type="evidence" value="ECO:0000314"/>
    <property type="project" value="RGD"/>
</dbReference>
<dbReference type="GO" id="GO:0097451">
    <property type="term" value="C:glial limiting end-foot"/>
    <property type="evidence" value="ECO:0000314"/>
    <property type="project" value="RGD"/>
</dbReference>
<dbReference type="GO" id="GO:0098978">
    <property type="term" value="C:glutamatergic synapse"/>
    <property type="evidence" value="ECO:0000266"/>
    <property type="project" value="RGD"/>
</dbReference>
<dbReference type="GO" id="GO:0005771">
    <property type="term" value="C:multivesicular body"/>
    <property type="evidence" value="ECO:0000314"/>
    <property type="project" value="RGD"/>
</dbReference>
<dbReference type="GO" id="GO:0043025">
    <property type="term" value="C:neuronal cell body"/>
    <property type="evidence" value="ECO:0000314"/>
    <property type="project" value="RGD"/>
</dbReference>
<dbReference type="GO" id="GO:1990030">
    <property type="term" value="C:pericellular basket"/>
    <property type="evidence" value="ECO:0000314"/>
    <property type="project" value="RGD"/>
</dbReference>
<dbReference type="GO" id="GO:0043204">
    <property type="term" value="C:perikaryon"/>
    <property type="evidence" value="ECO:0000314"/>
    <property type="project" value="RGD"/>
</dbReference>
<dbReference type="GO" id="GO:0005886">
    <property type="term" value="C:plasma membrane"/>
    <property type="evidence" value="ECO:0007669"/>
    <property type="project" value="UniProtKB-SubCell"/>
</dbReference>
<dbReference type="GO" id="GO:0008021">
    <property type="term" value="C:synaptic vesicle"/>
    <property type="evidence" value="ECO:0000266"/>
    <property type="project" value="RGD"/>
</dbReference>
<dbReference type="GO" id="GO:0030672">
    <property type="term" value="C:synaptic vesicle membrane"/>
    <property type="evidence" value="ECO:0000314"/>
    <property type="project" value="UniProtKB"/>
</dbReference>
<dbReference type="GO" id="GO:0005254">
    <property type="term" value="F:chloride channel activity"/>
    <property type="evidence" value="ECO:0000314"/>
    <property type="project" value="UniProtKB"/>
</dbReference>
<dbReference type="GO" id="GO:0005313">
    <property type="term" value="F:L-glutamate transmembrane transporter activity"/>
    <property type="evidence" value="ECO:0000318"/>
    <property type="project" value="GO_Central"/>
</dbReference>
<dbReference type="GO" id="GO:0140788">
    <property type="term" value="F:L-glutamate uniporter activity"/>
    <property type="evidence" value="ECO:0000314"/>
    <property type="project" value="UniProtKB"/>
</dbReference>
<dbReference type="GO" id="GO:0005326">
    <property type="term" value="F:neurotransmitter transmembrane transporter activity"/>
    <property type="evidence" value="ECO:0000318"/>
    <property type="project" value="GO_Central"/>
</dbReference>
<dbReference type="GO" id="GO:0005436">
    <property type="term" value="F:sodium:phosphate symporter activity"/>
    <property type="evidence" value="ECO:0000250"/>
    <property type="project" value="UniProtKB"/>
</dbReference>
<dbReference type="GO" id="GO:0090102">
    <property type="term" value="P:cochlea development"/>
    <property type="evidence" value="ECO:0000270"/>
    <property type="project" value="RGD"/>
</dbReference>
<dbReference type="GO" id="GO:0051938">
    <property type="term" value="P:L-glutamate import"/>
    <property type="evidence" value="ECO:0000314"/>
    <property type="project" value="UniProtKB"/>
</dbReference>
<dbReference type="GO" id="GO:0015813">
    <property type="term" value="P:L-glutamate transmembrane transport"/>
    <property type="evidence" value="ECO:0000315"/>
    <property type="project" value="UniProtKB"/>
</dbReference>
<dbReference type="GO" id="GO:0003407">
    <property type="term" value="P:neural retina development"/>
    <property type="evidence" value="ECO:0000270"/>
    <property type="project" value="RGD"/>
</dbReference>
<dbReference type="GO" id="GO:0098700">
    <property type="term" value="P:neurotransmitter loading into synaptic vesicle"/>
    <property type="evidence" value="ECO:0000266"/>
    <property type="project" value="RGD"/>
</dbReference>
<dbReference type="GO" id="GO:0055062">
    <property type="term" value="P:phosphate ion homeostasis"/>
    <property type="evidence" value="ECO:0000250"/>
    <property type="project" value="UniProtKB"/>
</dbReference>
<dbReference type="GO" id="GO:0051951">
    <property type="term" value="P:positive regulation of glutamate uptake involved in transmission of nerve impulse"/>
    <property type="evidence" value="ECO:0000250"/>
    <property type="project" value="UniProtKB"/>
</dbReference>
<dbReference type="GO" id="GO:0051631">
    <property type="term" value="P:regulation of acetylcholine uptake"/>
    <property type="evidence" value="ECO:0000314"/>
    <property type="project" value="UniProtKB"/>
</dbReference>
<dbReference type="GO" id="GO:0050803">
    <property type="term" value="P:regulation of synapse structure or activity"/>
    <property type="evidence" value="ECO:0000318"/>
    <property type="project" value="GO_Central"/>
</dbReference>
<dbReference type="GO" id="GO:0007605">
    <property type="term" value="P:sensory perception of sound"/>
    <property type="evidence" value="ECO:0007669"/>
    <property type="project" value="UniProtKB-KW"/>
</dbReference>
<dbReference type="GO" id="GO:0044341">
    <property type="term" value="P:sodium-dependent phosphate transport"/>
    <property type="evidence" value="ECO:0000250"/>
    <property type="project" value="UniProtKB"/>
</dbReference>
<dbReference type="GO" id="GO:0035249">
    <property type="term" value="P:synaptic transmission, glutamatergic"/>
    <property type="evidence" value="ECO:0000318"/>
    <property type="project" value="GO_Central"/>
</dbReference>
<dbReference type="CDD" id="cd17382">
    <property type="entry name" value="MFS_SLC17A6_7_8_VGluT"/>
    <property type="match status" value="1"/>
</dbReference>
<dbReference type="FunFam" id="1.20.1250.20:FF:000004">
    <property type="entry name" value="vesicular glutamate transporter 2 isoform X1"/>
    <property type="match status" value="1"/>
</dbReference>
<dbReference type="FunFam" id="1.20.1250.20:FF:000005">
    <property type="entry name" value="vesicular glutamate transporter 2 isoform X1"/>
    <property type="match status" value="1"/>
</dbReference>
<dbReference type="Gene3D" id="1.20.1250.20">
    <property type="entry name" value="MFS general substrate transporter like domains"/>
    <property type="match status" value="2"/>
</dbReference>
<dbReference type="InterPro" id="IPR011701">
    <property type="entry name" value="MFS"/>
</dbReference>
<dbReference type="InterPro" id="IPR020846">
    <property type="entry name" value="MFS_dom"/>
</dbReference>
<dbReference type="InterPro" id="IPR050382">
    <property type="entry name" value="MFS_Na/Anion_cotransporter"/>
</dbReference>
<dbReference type="InterPro" id="IPR036259">
    <property type="entry name" value="MFS_trans_sf"/>
</dbReference>
<dbReference type="PANTHER" id="PTHR11662">
    <property type="entry name" value="SOLUTE CARRIER FAMILY 17"/>
    <property type="match status" value="1"/>
</dbReference>
<dbReference type="PANTHER" id="PTHR11662:SF207">
    <property type="entry name" value="VESICULAR GLUTAMATE TRANSPORTER 3"/>
    <property type="match status" value="1"/>
</dbReference>
<dbReference type="Pfam" id="PF07690">
    <property type="entry name" value="MFS_1"/>
    <property type="match status" value="1"/>
</dbReference>
<dbReference type="SUPFAM" id="SSF103473">
    <property type="entry name" value="MFS general substrate transporter"/>
    <property type="match status" value="1"/>
</dbReference>
<dbReference type="PROSITE" id="PS50850">
    <property type="entry name" value="MFS"/>
    <property type="match status" value="1"/>
</dbReference>
<keyword id="KW-1003">Cell membrane</keyword>
<keyword id="KW-0868">Chloride</keyword>
<keyword id="KW-0869">Chloride channel</keyword>
<keyword id="KW-0968">Cytoplasmic vesicle</keyword>
<keyword id="KW-0325">Glycoprotein</keyword>
<keyword id="KW-1009">Hearing</keyword>
<keyword id="KW-0407">Ion channel</keyword>
<keyword id="KW-0406">Ion transport</keyword>
<keyword id="KW-0472">Membrane</keyword>
<keyword id="KW-0532">Neurotransmitter transport</keyword>
<keyword id="KW-0592">Phosphate transport</keyword>
<keyword id="KW-1185">Reference proteome</keyword>
<keyword id="KW-0915">Sodium</keyword>
<keyword id="KW-0739">Sodium transport</keyword>
<keyword id="KW-0769">Symport</keyword>
<keyword id="KW-0770">Synapse</keyword>
<keyword id="KW-0771">Synaptosome</keyword>
<keyword id="KW-0812">Transmembrane</keyword>
<keyword id="KW-1133">Transmembrane helix</keyword>
<keyword id="KW-0813">Transport</keyword>
<evidence type="ECO:0000250" key="1">
    <source>
        <dbReference type="UniProtKB" id="Q8NDX2"/>
    </source>
</evidence>
<evidence type="ECO:0000255" key="2"/>
<evidence type="ECO:0000256" key="3">
    <source>
        <dbReference type="SAM" id="MobiDB-lite"/>
    </source>
</evidence>
<evidence type="ECO:0000269" key="4">
    <source>
    </source>
</evidence>
<evidence type="ECO:0000269" key="5">
    <source>
    </source>
</evidence>
<evidence type="ECO:0000269" key="6">
    <source>
    </source>
</evidence>
<evidence type="ECO:0000269" key="7">
    <source>
    </source>
</evidence>
<evidence type="ECO:0000269" key="8">
    <source>
    </source>
</evidence>
<evidence type="ECO:0000269" key="9">
    <source>
    </source>
</evidence>
<evidence type="ECO:0000269" key="10">
    <source>
    </source>
</evidence>
<evidence type="ECO:0000269" key="11">
    <source>
    </source>
</evidence>
<evidence type="ECO:0000303" key="12">
    <source>
    </source>
</evidence>
<evidence type="ECO:0000305" key="13"/>
<evidence type="ECO:0000305" key="14">
    <source>
    </source>
</evidence>
<evidence type="ECO:0000312" key="15">
    <source>
        <dbReference type="RGD" id="628870"/>
    </source>
</evidence>
<accession>Q7TSF2</accession>
<accession>Q8K1Q1</accession>
<gene>
    <name evidence="15" type="primary">Slc17a8</name>
    <name type="synonym">Vglut3</name>
</gene>
<reference key="1">
    <citation type="journal article" date="2002" name="J. Neurosci.">
        <title>A third vesicular glutamate transporter expressed by cholinergic and serotoninergic neurons.</title>
        <authorList>
            <person name="Gras C."/>
            <person name="Herzog E."/>
            <person name="Bellenchi G.C."/>
            <person name="Bernard V."/>
            <person name="Ravassard P."/>
            <person name="Pohl M."/>
            <person name="Gasnier B."/>
            <person name="Giros B."/>
            <person name="El Mestikawy S."/>
        </authorList>
    </citation>
    <scope>NUCLEOTIDE SEQUENCE [MRNA]</scope>
    <scope>FUNCTION</scope>
    <scope>TRANSPORTER ACTIVITY</scope>
    <scope>ACTIVITY REGULATION</scope>
    <scope>BIOPHYSICOCHEMICAL PROPERTIES</scope>
    <scope>SUBCELLULAR LOCATION</scope>
    <scope>TISSUE SPECIFICITY</scope>
    <source>
        <strain>Sprague-Dawley</strain>
        <tissue>Brain</tissue>
    </source>
</reference>
<reference key="2">
    <citation type="journal article" date="2002" name="Proc. Natl. Acad. Sci. U.S.A.">
        <title>The identification of vesicular glutamate transporter 3 suggests novel modes of signaling by glutamate.</title>
        <authorList>
            <person name="Fremeau R.T. Jr."/>
            <person name="Burman J."/>
            <person name="Qureshi T."/>
            <person name="Tran C.H."/>
            <person name="Proctor J."/>
            <person name="Johnson J."/>
            <person name="Zhang H."/>
            <person name="Sulzer D."/>
            <person name="Copenhagen D.R."/>
            <person name="Storm-Mathisen J."/>
            <person name="Reimer R.J."/>
            <person name="Chaudhry F.A."/>
            <person name="Edwards R.H."/>
        </authorList>
    </citation>
    <scope>NUCLEOTIDE SEQUENCE [MRNA]</scope>
    <scope>FUNCTION</scope>
    <scope>TRANSPORTER ACTIVITY</scope>
    <scope>ACTIVITY REGULATION</scope>
    <scope>BIOPHYSICOCHEMICAL PROPERTIES</scope>
    <scope>SUBCELLULAR LOCATION</scope>
    <scope>TISSUE SPECIFICITY</scope>
    <source>
        <strain>Sprague-Dawley</strain>
        <tissue>Liver</tissue>
    </source>
</reference>
<reference key="3">
    <citation type="journal article" date="2002" name="J. Biol. Chem.">
        <title>Molecular cloning and functional identification of mouse vesicular glutamate transporter 3 and its expression in subsets of novel excitatory neurons.</title>
        <authorList>
            <person name="Schaefer M.K.-H."/>
            <person name="Varoqui H."/>
            <person name="Defamie N."/>
            <person name="Weihe E."/>
            <person name="Erickson J.D."/>
        </authorList>
    </citation>
    <scope>TISSUE SPECIFICITY</scope>
</reference>
<reference key="4">
    <citation type="journal article" date="2004" name="Neuroscience">
        <title>Localization of VGLUT3, the vesicular glutamate transporter type 3, in the rat brain.</title>
        <authorList>
            <person name="Herzog E."/>
            <person name="Gilchrist J."/>
            <person name="Gras C."/>
            <person name="Muzerelle A."/>
            <person name="Ravassard P."/>
            <person name="Giros B."/>
            <person name="Gaspar P."/>
            <person name="El Mestikawy S."/>
        </authorList>
    </citation>
    <scope>TISSUE SPECIFICITY</scope>
</reference>
<reference key="5">
    <citation type="journal article" date="2005" name="Nat. Neurosci.">
        <title>Inhibitory synapses in the developing auditory system are glutamatergic.</title>
        <authorList>
            <person name="Gillespie D.C."/>
            <person name="Kim G."/>
            <person name="Kandler K."/>
        </authorList>
    </citation>
    <scope>TISSUE SPECIFICITY</scope>
</reference>
<reference key="6">
    <citation type="journal article" date="2006" name="Cell">
        <title>Molecular anatomy of a trafficking organelle.</title>
        <authorList>
            <person name="Takamori S."/>
            <person name="Holt M."/>
            <person name="Stenius K."/>
            <person name="Lemke E.A."/>
            <person name="Groenborg M."/>
            <person name="Riedel D."/>
            <person name="Urlaub H."/>
            <person name="Schenck S."/>
            <person name="Bruegger B."/>
            <person name="Ringler P."/>
            <person name="Mueller S.A."/>
            <person name="Rammner B."/>
            <person name="Graeter F."/>
            <person name="Hub J.S."/>
            <person name="De Groot B.L."/>
            <person name="Mieskes G."/>
            <person name="Moriyama Y."/>
            <person name="Klingauf J."/>
            <person name="Grubmueller H."/>
            <person name="Heuser J."/>
            <person name="Wieland F."/>
            <person name="Jahn R."/>
        </authorList>
    </citation>
    <scope>IDENTIFICATION BY MASS SPECTROMETRY</scope>
</reference>
<reference key="7">
    <citation type="journal article" date="2008" name="Nat. Neurosci.">
        <title>The vesicular glutamate transporter VGLUT3 synergizes striatal acetylcholine tone.</title>
        <authorList>
            <person name="Gras C."/>
            <person name="Amilhon B."/>
            <person name="Lepicard E.M."/>
            <person name="Poirel O."/>
            <person name="Vinatier J."/>
            <person name="Herbin M."/>
            <person name="Dumas S."/>
            <person name="Tzavara E.T."/>
            <person name="Wade M.R."/>
            <person name="Nomikos G.G."/>
            <person name="Hanoun N."/>
            <person name="Saurini F."/>
            <person name="Kemel M.-L."/>
            <person name="Gasnier B."/>
            <person name="Giros B."/>
            <person name="Mestikawy S.E."/>
        </authorList>
    </citation>
    <scope>FUNCTION</scope>
    <scope>SUBCELLULAR LOCATION</scope>
</reference>
<reference key="8">
    <citation type="journal article" date="2008" name="Neuron">
        <title>Sensorineural deafness and seizures in mice lacking vesicular glutamate transporter 3.</title>
        <authorList>
            <person name="Seal R.P."/>
            <person name="Akil O."/>
            <person name="Yi E."/>
            <person name="Weber C.M."/>
            <person name="Grant L."/>
            <person name="Yoo J."/>
            <person name="Clause A."/>
            <person name="Kandler K."/>
            <person name="Noebels J.L."/>
            <person name="Glowatzki E."/>
            <person name="Lustig L.R."/>
            <person name="Edwards R.H."/>
        </authorList>
    </citation>
    <scope>TISSUE SPECIFICITY</scope>
</reference>
<reference key="9">
    <citation type="journal article" date="2016" name="Neuron">
        <title>Protons Regulate Vesicular Glutamate Transporters through an Allosteric Mechanism.</title>
        <authorList>
            <person name="Eriksen J."/>
            <person name="Chang R."/>
            <person name="McGregor M."/>
            <person name="Silm K."/>
            <person name="Suzuki T."/>
            <person name="Edwards R.H."/>
        </authorList>
    </citation>
    <scope>FUNCTION</scope>
    <scope>TRANSPORTER ACTIVITY</scope>
    <scope>ACTIVITY REGULATION</scope>
</reference>
<feature type="chain" id="PRO_0000331616" description="Vesicular glutamate transporter 3">
    <location>
        <begin position="1"/>
        <end position="588"/>
    </location>
</feature>
<feature type="topological domain" description="Cytoplasmic" evidence="2">
    <location>
        <begin position="1"/>
        <end position="76"/>
    </location>
</feature>
<feature type="transmembrane region" description="Helical" evidence="2">
    <location>
        <begin position="77"/>
        <end position="97"/>
    </location>
</feature>
<feature type="topological domain" description="Vesicular" evidence="2">
    <location>
        <begin position="98"/>
        <end position="130"/>
    </location>
</feature>
<feature type="transmembrane region" description="Helical" evidence="2">
    <location>
        <begin position="131"/>
        <end position="151"/>
    </location>
</feature>
<feature type="topological domain" description="Cytoplasmic" evidence="2">
    <location>
        <begin position="152"/>
        <end position="153"/>
    </location>
</feature>
<feature type="transmembrane region" description="Helical" evidence="2">
    <location>
        <begin position="154"/>
        <end position="174"/>
    </location>
</feature>
<feature type="topological domain" description="Vesicular" evidence="2">
    <location>
        <begin position="175"/>
        <end position="182"/>
    </location>
</feature>
<feature type="transmembrane region" description="Helical" evidence="2">
    <location>
        <begin position="183"/>
        <end position="203"/>
    </location>
</feature>
<feature type="topological domain" description="Cytoplasmic" evidence="2">
    <location>
        <begin position="204"/>
        <end position="221"/>
    </location>
</feature>
<feature type="transmembrane region" description="Helical" evidence="2">
    <location>
        <begin position="222"/>
        <end position="242"/>
    </location>
</feature>
<feature type="topological domain" description="Vesicular" evidence="2">
    <location>
        <begin position="243"/>
        <end position="249"/>
    </location>
</feature>
<feature type="transmembrane region" description="Helical" evidence="2">
    <location>
        <begin position="250"/>
        <end position="270"/>
    </location>
</feature>
<feature type="topological domain" description="Cytoplasmic" evidence="2">
    <location>
        <begin position="271"/>
        <end position="314"/>
    </location>
</feature>
<feature type="transmembrane region" description="Helical" evidence="2">
    <location>
        <begin position="315"/>
        <end position="335"/>
    </location>
</feature>
<feature type="topological domain" description="Vesicular" evidence="2">
    <location>
        <begin position="336"/>
        <end position="353"/>
    </location>
</feature>
<feature type="transmembrane region" description="Helical" evidence="2">
    <location>
        <begin position="354"/>
        <end position="374"/>
    </location>
</feature>
<feature type="topological domain" description="Cytoplasmic" evidence="2">
    <location>
        <begin position="375"/>
        <end position="390"/>
    </location>
</feature>
<feature type="transmembrane region" description="Helical" evidence="2">
    <location>
        <begin position="391"/>
        <end position="411"/>
    </location>
</feature>
<feature type="topological domain" description="Vesicular" evidence="2">
    <location>
        <begin position="412"/>
        <end position="413"/>
    </location>
</feature>
<feature type="transmembrane region" description="Helical" evidence="2">
    <location>
        <begin position="414"/>
        <end position="434"/>
    </location>
</feature>
<feature type="topological domain" description="Cytoplasmic" evidence="2">
    <location>
        <begin position="435"/>
        <end position="447"/>
    </location>
</feature>
<feature type="transmembrane region" description="Helical" evidence="2">
    <location>
        <begin position="448"/>
        <end position="468"/>
    </location>
</feature>
<feature type="topological domain" description="Vesicular" evidence="2">
    <location>
        <begin position="469"/>
        <end position="481"/>
    </location>
</feature>
<feature type="transmembrane region" description="Helical" evidence="2">
    <location>
        <begin position="482"/>
        <end position="502"/>
    </location>
</feature>
<feature type="topological domain" description="Cytoplasmic" evidence="2">
    <location>
        <begin position="503"/>
        <end position="585"/>
    </location>
</feature>
<feature type="region of interest" description="Disordered" evidence="3">
    <location>
        <begin position="539"/>
        <end position="588"/>
    </location>
</feature>
<feature type="compositionally biased region" description="Basic and acidic residues" evidence="3">
    <location>
        <begin position="558"/>
        <end position="569"/>
    </location>
</feature>
<feature type="compositionally biased region" description="Acidic residues" evidence="3">
    <location>
        <begin position="570"/>
        <end position="588"/>
    </location>
</feature>
<feature type="glycosylation site" description="N-linked (GlcNAc...) asparagine" evidence="2">
    <location>
        <position position="106"/>
    </location>
</feature>
<feature type="sequence conflict" description="In Ref. 2; AAM50094." evidence="13" ref="2">
    <original>N</original>
    <variation>K</variation>
    <location>
        <position position="4"/>
    </location>
</feature>